<dbReference type="EMBL" id="AC097280">
    <property type="protein sequence ID" value="AAO34502.1"/>
    <property type="status" value="ALT_SEQ"/>
    <property type="molecule type" value="Genomic_DNA"/>
</dbReference>
<dbReference type="EMBL" id="DP000009">
    <property type="protein sequence ID" value="ABF97678.1"/>
    <property type="molecule type" value="Genomic_DNA"/>
</dbReference>
<dbReference type="EMBL" id="AP008209">
    <property type="protein sequence ID" value="BAF12596.1"/>
    <property type="molecule type" value="Genomic_DNA"/>
</dbReference>
<dbReference type="EMBL" id="AP014959">
    <property type="protein sequence ID" value="BAS85315.1"/>
    <property type="molecule type" value="Genomic_DNA"/>
</dbReference>
<dbReference type="EMBL" id="CM000140">
    <property type="protein sequence ID" value="EEE59516.1"/>
    <property type="molecule type" value="Genomic_DNA"/>
</dbReference>
<dbReference type="EMBL" id="AK108660">
    <property type="protein sequence ID" value="BAG98481.1"/>
    <property type="molecule type" value="mRNA"/>
</dbReference>
<dbReference type="RefSeq" id="XP_015628568.1">
    <property type="nucleotide sequence ID" value="XM_015773082.1"/>
</dbReference>
<dbReference type="SMR" id="Q10GM3"/>
<dbReference type="FunCoup" id="Q10GM3">
    <property type="interactions" value="2"/>
</dbReference>
<dbReference type="STRING" id="39947.Q10GM3"/>
<dbReference type="PaxDb" id="39947-Q10GM3"/>
<dbReference type="EnsemblPlants" id="Os03t0622200-01">
    <property type="protein sequence ID" value="Os03t0622200-01"/>
    <property type="gene ID" value="Os03g0622200"/>
</dbReference>
<dbReference type="Gramene" id="Os03t0622200-01">
    <property type="protein sequence ID" value="Os03t0622200-01"/>
    <property type="gene ID" value="Os03g0622200"/>
</dbReference>
<dbReference type="KEGG" id="dosa:Os03g0622200"/>
<dbReference type="eggNOG" id="ENOG502QT0X">
    <property type="taxonomic scope" value="Eukaryota"/>
</dbReference>
<dbReference type="HOGENOM" id="CLU_015069_0_1_1"/>
<dbReference type="InParanoid" id="Q10GM3"/>
<dbReference type="OrthoDB" id="596845at2759"/>
<dbReference type="Proteomes" id="UP000000763">
    <property type="component" value="Chromosome 3"/>
</dbReference>
<dbReference type="Proteomes" id="UP000007752">
    <property type="component" value="Chromosome 3"/>
</dbReference>
<dbReference type="Proteomes" id="UP000059680">
    <property type="component" value="Chromosome 3"/>
</dbReference>
<dbReference type="GO" id="GO:0005634">
    <property type="term" value="C:nucleus"/>
    <property type="evidence" value="ECO:0007669"/>
    <property type="project" value="UniProtKB-SubCell"/>
</dbReference>
<dbReference type="GO" id="GO:0003677">
    <property type="term" value="F:DNA binding"/>
    <property type="evidence" value="ECO:0007669"/>
    <property type="project" value="UniProtKB-KW"/>
</dbReference>
<dbReference type="CDD" id="cd10017">
    <property type="entry name" value="B3_DNA"/>
    <property type="match status" value="2"/>
</dbReference>
<dbReference type="Gene3D" id="2.40.330.10">
    <property type="entry name" value="DNA-binding pseudobarrel domain"/>
    <property type="match status" value="2"/>
</dbReference>
<dbReference type="InterPro" id="IPR003340">
    <property type="entry name" value="B3_DNA-bd"/>
</dbReference>
<dbReference type="InterPro" id="IPR015300">
    <property type="entry name" value="DNA-bd_pseudobarrel_sf"/>
</dbReference>
<dbReference type="InterPro" id="IPR044837">
    <property type="entry name" value="REM16-like"/>
</dbReference>
<dbReference type="PANTHER" id="PTHR31391:SF70">
    <property type="entry name" value="B3 DOMAIN-CONTAINING PROTEIN OS03G0622200"/>
    <property type="match status" value="1"/>
</dbReference>
<dbReference type="PANTHER" id="PTHR31391">
    <property type="entry name" value="B3 DOMAIN-CONTAINING PROTEIN OS11G0197600-RELATED"/>
    <property type="match status" value="1"/>
</dbReference>
<dbReference type="Pfam" id="PF02362">
    <property type="entry name" value="B3"/>
    <property type="match status" value="2"/>
</dbReference>
<dbReference type="SMART" id="SM01019">
    <property type="entry name" value="B3"/>
    <property type="match status" value="2"/>
</dbReference>
<dbReference type="SUPFAM" id="SSF101936">
    <property type="entry name" value="DNA-binding pseudobarrel domain"/>
    <property type="match status" value="2"/>
</dbReference>
<dbReference type="PROSITE" id="PS50863">
    <property type="entry name" value="B3"/>
    <property type="match status" value="2"/>
</dbReference>
<feature type="chain" id="PRO_0000378052" description="B3 domain-containing protein Os03g0622200">
    <location>
        <begin position="1"/>
        <end position="378"/>
    </location>
</feature>
<feature type="DNA-binding region" description="TF-B3 1" evidence="1">
    <location>
        <begin position="29"/>
        <end position="124"/>
    </location>
</feature>
<feature type="DNA-binding region" description="TF-B3 2" evidence="1">
    <location>
        <begin position="256"/>
        <end position="370"/>
    </location>
</feature>
<feature type="region of interest" description="Disordered" evidence="2">
    <location>
        <begin position="140"/>
        <end position="159"/>
    </location>
</feature>
<proteinExistence type="evidence at transcript level"/>
<keyword id="KW-0238">DNA-binding</keyword>
<keyword id="KW-0539">Nucleus</keyword>
<keyword id="KW-1185">Reference proteome</keyword>
<keyword id="KW-0677">Repeat</keyword>
<keyword id="KW-0804">Transcription</keyword>
<keyword id="KW-0805">Transcription regulation</keyword>
<sequence length="378" mass="42360">MGMLKIGKNCSVCKEWQEHCYWSHMADHSKHFLKHMVGDFTESMTVPARFANNFNGHISEEVNLRSPSGETWSIGVANSDAGELVLQPGWKEFVDGNGIEEGDCLLFRYSGVSSSFDVLIFDPSGCEKASPHFVGSHGFGRAENSAGAEQGGRNGRRTPPIVDGDNGHRHHLEMTLHRNSCRSIPRACKRSLFSDETEAKENDGEDEDVVAAAEGGRYGEYYFSRHGRVAEYNLREEDREEISRVPVPVQPGNPVFVQVIHSSHVRSSKYCIVGVSPEFAGKYLGAVEREVVLERASRGGEWHVPFVHRQNTRGFYGAGWRQFAGDNRLVAHDVCLFELTMVDAAASGGGNRRRRWSRRPTMTVHVLRRVRGRFVLLR</sequence>
<protein>
    <recommendedName>
        <fullName>B3 domain-containing protein Os03g0622200</fullName>
    </recommendedName>
</protein>
<name>Y3222_ORYSJ</name>
<organism>
    <name type="scientific">Oryza sativa subsp. japonica</name>
    <name type="common">Rice</name>
    <dbReference type="NCBI Taxonomy" id="39947"/>
    <lineage>
        <taxon>Eukaryota</taxon>
        <taxon>Viridiplantae</taxon>
        <taxon>Streptophyta</taxon>
        <taxon>Embryophyta</taxon>
        <taxon>Tracheophyta</taxon>
        <taxon>Spermatophyta</taxon>
        <taxon>Magnoliopsida</taxon>
        <taxon>Liliopsida</taxon>
        <taxon>Poales</taxon>
        <taxon>Poaceae</taxon>
        <taxon>BOP clade</taxon>
        <taxon>Oryzoideae</taxon>
        <taxon>Oryzeae</taxon>
        <taxon>Oryzinae</taxon>
        <taxon>Oryza</taxon>
        <taxon>Oryza sativa</taxon>
    </lineage>
</organism>
<evidence type="ECO:0000255" key="1">
    <source>
        <dbReference type="PROSITE-ProRule" id="PRU00326"/>
    </source>
</evidence>
<evidence type="ECO:0000256" key="2">
    <source>
        <dbReference type="SAM" id="MobiDB-lite"/>
    </source>
</evidence>
<evidence type="ECO:0000305" key="3"/>
<accession>Q10GM3</accession>
<accession>A0A0P0W086</accession>
<accession>Q851V0</accession>
<gene>
    <name type="ordered locus">Os03g0622200</name>
    <name type="ordered locus">LOC_Os03g42430</name>
    <name type="ORF">OsJ_11768</name>
    <name type="ORF">OSJNBb0111B07.22</name>
</gene>
<reference key="1">
    <citation type="journal article" date="2005" name="Genome Res.">
        <title>Sequence, annotation, and analysis of synteny between rice chromosome 3 and diverged grass species.</title>
        <authorList>
            <consortium name="The rice chromosome 3 sequencing consortium"/>
            <person name="Buell C.R."/>
            <person name="Yuan Q."/>
            <person name="Ouyang S."/>
            <person name="Liu J."/>
            <person name="Zhu W."/>
            <person name="Wang A."/>
            <person name="Maiti R."/>
            <person name="Haas B."/>
            <person name="Wortman J."/>
            <person name="Pertea M."/>
            <person name="Jones K.M."/>
            <person name="Kim M."/>
            <person name="Overton L."/>
            <person name="Tsitrin T."/>
            <person name="Fadrosh D."/>
            <person name="Bera J."/>
            <person name="Weaver B."/>
            <person name="Jin S."/>
            <person name="Johri S."/>
            <person name="Reardon M."/>
            <person name="Webb K."/>
            <person name="Hill J."/>
            <person name="Moffat K."/>
            <person name="Tallon L."/>
            <person name="Van Aken S."/>
            <person name="Lewis M."/>
            <person name="Utterback T."/>
            <person name="Feldblyum T."/>
            <person name="Zismann V."/>
            <person name="Iobst S."/>
            <person name="Hsiao J."/>
            <person name="de Vazeille A.R."/>
            <person name="Salzberg S.L."/>
            <person name="White O."/>
            <person name="Fraser C.M."/>
            <person name="Yu Y."/>
            <person name="Kim H."/>
            <person name="Rambo T."/>
            <person name="Currie J."/>
            <person name="Collura K."/>
            <person name="Kernodle-Thompson S."/>
            <person name="Wei F."/>
            <person name="Kudrna K."/>
            <person name="Ammiraju J.S.S."/>
            <person name="Luo M."/>
            <person name="Goicoechea J.L."/>
            <person name="Wing R.A."/>
            <person name="Henry D."/>
            <person name="Oates R."/>
            <person name="Palmer M."/>
            <person name="Pries G."/>
            <person name="Saski C."/>
            <person name="Simmons J."/>
            <person name="Soderlund C."/>
            <person name="Nelson W."/>
            <person name="de la Bastide M."/>
            <person name="Spiegel L."/>
            <person name="Nascimento L."/>
            <person name="Huang E."/>
            <person name="Preston R."/>
            <person name="Zutavern T."/>
            <person name="Palmer L."/>
            <person name="O'Shaughnessy A."/>
            <person name="Dike S."/>
            <person name="McCombie W.R."/>
            <person name="Minx P."/>
            <person name="Cordum H."/>
            <person name="Wilson R."/>
            <person name="Jin W."/>
            <person name="Lee H.R."/>
            <person name="Jiang J."/>
            <person name="Jackson S."/>
        </authorList>
    </citation>
    <scope>NUCLEOTIDE SEQUENCE [LARGE SCALE GENOMIC DNA]</scope>
    <source>
        <strain>cv. Nipponbare</strain>
    </source>
</reference>
<reference key="2">
    <citation type="journal article" date="2005" name="Nature">
        <title>The map-based sequence of the rice genome.</title>
        <authorList>
            <consortium name="International rice genome sequencing project (IRGSP)"/>
        </authorList>
    </citation>
    <scope>NUCLEOTIDE SEQUENCE [LARGE SCALE GENOMIC DNA]</scope>
    <source>
        <strain>cv. Nipponbare</strain>
    </source>
</reference>
<reference key="3">
    <citation type="journal article" date="2008" name="Nucleic Acids Res.">
        <title>The rice annotation project database (RAP-DB): 2008 update.</title>
        <authorList>
            <consortium name="The rice annotation project (RAP)"/>
        </authorList>
    </citation>
    <scope>GENOME REANNOTATION</scope>
    <source>
        <strain>cv. Nipponbare</strain>
    </source>
</reference>
<reference key="4">
    <citation type="journal article" date="2013" name="Rice">
        <title>Improvement of the Oryza sativa Nipponbare reference genome using next generation sequence and optical map data.</title>
        <authorList>
            <person name="Kawahara Y."/>
            <person name="de la Bastide M."/>
            <person name="Hamilton J.P."/>
            <person name="Kanamori H."/>
            <person name="McCombie W.R."/>
            <person name="Ouyang S."/>
            <person name="Schwartz D.C."/>
            <person name="Tanaka T."/>
            <person name="Wu J."/>
            <person name="Zhou S."/>
            <person name="Childs K.L."/>
            <person name="Davidson R.M."/>
            <person name="Lin H."/>
            <person name="Quesada-Ocampo L."/>
            <person name="Vaillancourt B."/>
            <person name="Sakai H."/>
            <person name="Lee S.S."/>
            <person name="Kim J."/>
            <person name="Numa H."/>
            <person name="Itoh T."/>
            <person name="Buell C.R."/>
            <person name="Matsumoto T."/>
        </authorList>
    </citation>
    <scope>GENOME REANNOTATION</scope>
    <source>
        <strain>cv. Nipponbare</strain>
    </source>
</reference>
<reference key="5">
    <citation type="journal article" date="2005" name="PLoS Biol.">
        <title>The genomes of Oryza sativa: a history of duplications.</title>
        <authorList>
            <person name="Yu J."/>
            <person name="Wang J."/>
            <person name="Lin W."/>
            <person name="Li S."/>
            <person name="Li H."/>
            <person name="Zhou J."/>
            <person name="Ni P."/>
            <person name="Dong W."/>
            <person name="Hu S."/>
            <person name="Zeng C."/>
            <person name="Zhang J."/>
            <person name="Zhang Y."/>
            <person name="Li R."/>
            <person name="Xu Z."/>
            <person name="Li S."/>
            <person name="Li X."/>
            <person name="Zheng H."/>
            <person name="Cong L."/>
            <person name="Lin L."/>
            <person name="Yin J."/>
            <person name="Geng J."/>
            <person name="Li G."/>
            <person name="Shi J."/>
            <person name="Liu J."/>
            <person name="Lv H."/>
            <person name="Li J."/>
            <person name="Wang J."/>
            <person name="Deng Y."/>
            <person name="Ran L."/>
            <person name="Shi X."/>
            <person name="Wang X."/>
            <person name="Wu Q."/>
            <person name="Li C."/>
            <person name="Ren X."/>
            <person name="Wang J."/>
            <person name="Wang X."/>
            <person name="Li D."/>
            <person name="Liu D."/>
            <person name="Zhang X."/>
            <person name="Ji Z."/>
            <person name="Zhao W."/>
            <person name="Sun Y."/>
            <person name="Zhang Z."/>
            <person name="Bao J."/>
            <person name="Han Y."/>
            <person name="Dong L."/>
            <person name="Ji J."/>
            <person name="Chen P."/>
            <person name="Wu S."/>
            <person name="Liu J."/>
            <person name="Xiao Y."/>
            <person name="Bu D."/>
            <person name="Tan J."/>
            <person name="Yang L."/>
            <person name="Ye C."/>
            <person name="Zhang J."/>
            <person name="Xu J."/>
            <person name="Zhou Y."/>
            <person name="Yu Y."/>
            <person name="Zhang B."/>
            <person name="Zhuang S."/>
            <person name="Wei H."/>
            <person name="Liu B."/>
            <person name="Lei M."/>
            <person name="Yu H."/>
            <person name="Li Y."/>
            <person name="Xu H."/>
            <person name="Wei S."/>
            <person name="He X."/>
            <person name="Fang L."/>
            <person name="Zhang Z."/>
            <person name="Zhang Y."/>
            <person name="Huang X."/>
            <person name="Su Z."/>
            <person name="Tong W."/>
            <person name="Li J."/>
            <person name="Tong Z."/>
            <person name="Li S."/>
            <person name="Ye J."/>
            <person name="Wang L."/>
            <person name="Fang L."/>
            <person name="Lei T."/>
            <person name="Chen C.-S."/>
            <person name="Chen H.-C."/>
            <person name="Xu Z."/>
            <person name="Li H."/>
            <person name="Huang H."/>
            <person name="Zhang F."/>
            <person name="Xu H."/>
            <person name="Li N."/>
            <person name="Zhao C."/>
            <person name="Li S."/>
            <person name="Dong L."/>
            <person name="Huang Y."/>
            <person name="Li L."/>
            <person name="Xi Y."/>
            <person name="Qi Q."/>
            <person name="Li W."/>
            <person name="Zhang B."/>
            <person name="Hu W."/>
            <person name="Zhang Y."/>
            <person name="Tian X."/>
            <person name="Jiao Y."/>
            <person name="Liang X."/>
            <person name="Jin J."/>
            <person name="Gao L."/>
            <person name="Zheng W."/>
            <person name="Hao B."/>
            <person name="Liu S.-M."/>
            <person name="Wang W."/>
            <person name="Yuan L."/>
            <person name="Cao M."/>
            <person name="McDermott J."/>
            <person name="Samudrala R."/>
            <person name="Wang J."/>
            <person name="Wong G.K.-S."/>
            <person name="Yang H."/>
        </authorList>
    </citation>
    <scope>NUCLEOTIDE SEQUENCE [LARGE SCALE GENOMIC DNA]</scope>
    <source>
        <strain>cv. Nipponbare</strain>
    </source>
</reference>
<reference key="6">
    <citation type="journal article" date="2003" name="Science">
        <title>Collection, mapping, and annotation of over 28,000 cDNA clones from japonica rice.</title>
        <authorList>
            <consortium name="The rice full-length cDNA consortium"/>
        </authorList>
    </citation>
    <scope>NUCLEOTIDE SEQUENCE [LARGE SCALE MRNA]</scope>
    <source>
        <strain>cv. Nipponbare</strain>
    </source>
</reference>
<comment type="subcellular location">
    <subcellularLocation>
        <location evidence="1">Nucleus</location>
    </subcellularLocation>
</comment>
<comment type="sequence caution" evidence="3">
    <conflict type="erroneous gene model prediction">
        <sequence resource="EMBL-CDS" id="AAO34502"/>
    </conflict>
    <text>The predicted gene has been split into 2 genes: Os03g0622100 and Os03g0622200.</text>
</comment>